<reference key="1">
    <citation type="submission" date="2009-07" db="EMBL/GenBank/DDBJ databases">
        <title>Complete sequence of Pectobacterium carotovorum subsp. carotovorum PC1.</title>
        <authorList>
            <consortium name="US DOE Joint Genome Institute"/>
            <person name="Lucas S."/>
            <person name="Copeland A."/>
            <person name="Lapidus A."/>
            <person name="Glavina del Rio T."/>
            <person name="Tice H."/>
            <person name="Bruce D."/>
            <person name="Goodwin L."/>
            <person name="Pitluck S."/>
            <person name="Munk A.C."/>
            <person name="Brettin T."/>
            <person name="Detter J.C."/>
            <person name="Han C."/>
            <person name="Tapia R."/>
            <person name="Larimer F."/>
            <person name="Land M."/>
            <person name="Hauser L."/>
            <person name="Kyrpides N."/>
            <person name="Mikhailova N."/>
            <person name="Balakrishnan V."/>
            <person name="Glasner J."/>
            <person name="Perna N.T."/>
        </authorList>
    </citation>
    <scope>NUCLEOTIDE SEQUENCE [LARGE SCALE GENOMIC DNA]</scope>
    <source>
        <strain>PC1</strain>
    </source>
</reference>
<feature type="chain" id="PRO_1000214454" description="Large ribosomal subunit protein uL2">
    <location>
        <begin position="1"/>
        <end position="273"/>
    </location>
</feature>
<feature type="region of interest" description="Disordered" evidence="2">
    <location>
        <begin position="28"/>
        <end position="54"/>
    </location>
</feature>
<feature type="region of interest" description="Disordered" evidence="2">
    <location>
        <begin position="221"/>
        <end position="273"/>
    </location>
</feature>
<feature type="compositionally biased region" description="Low complexity" evidence="2">
    <location>
        <begin position="39"/>
        <end position="48"/>
    </location>
</feature>
<gene>
    <name evidence="1" type="primary">rplB</name>
    <name type="ordered locus">PC1_3819</name>
</gene>
<protein>
    <recommendedName>
        <fullName evidence="1">Large ribosomal subunit protein uL2</fullName>
    </recommendedName>
    <alternativeName>
        <fullName evidence="3">50S ribosomal protein L2</fullName>
    </alternativeName>
</protein>
<dbReference type="EMBL" id="CP001657">
    <property type="protein sequence ID" value="ACT14834.1"/>
    <property type="molecule type" value="Genomic_DNA"/>
</dbReference>
<dbReference type="RefSeq" id="WP_015841925.1">
    <property type="nucleotide sequence ID" value="NC_012917.1"/>
</dbReference>
<dbReference type="SMR" id="C6DG71"/>
<dbReference type="STRING" id="561230.PC1_3819"/>
<dbReference type="GeneID" id="67792284"/>
<dbReference type="KEGG" id="pct:PC1_3819"/>
<dbReference type="eggNOG" id="COG0090">
    <property type="taxonomic scope" value="Bacteria"/>
</dbReference>
<dbReference type="HOGENOM" id="CLU_036235_2_1_6"/>
<dbReference type="OrthoDB" id="9778722at2"/>
<dbReference type="Proteomes" id="UP000002736">
    <property type="component" value="Chromosome"/>
</dbReference>
<dbReference type="GO" id="GO:0015934">
    <property type="term" value="C:large ribosomal subunit"/>
    <property type="evidence" value="ECO:0007669"/>
    <property type="project" value="InterPro"/>
</dbReference>
<dbReference type="GO" id="GO:0019843">
    <property type="term" value="F:rRNA binding"/>
    <property type="evidence" value="ECO:0007669"/>
    <property type="project" value="UniProtKB-UniRule"/>
</dbReference>
<dbReference type="GO" id="GO:0003735">
    <property type="term" value="F:structural constituent of ribosome"/>
    <property type="evidence" value="ECO:0007669"/>
    <property type="project" value="InterPro"/>
</dbReference>
<dbReference type="GO" id="GO:0016740">
    <property type="term" value="F:transferase activity"/>
    <property type="evidence" value="ECO:0007669"/>
    <property type="project" value="InterPro"/>
</dbReference>
<dbReference type="GO" id="GO:0002181">
    <property type="term" value="P:cytoplasmic translation"/>
    <property type="evidence" value="ECO:0007669"/>
    <property type="project" value="TreeGrafter"/>
</dbReference>
<dbReference type="FunFam" id="2.30.30.30:FF:000001">
    <property type="entry name" value="50S ribosomal protein L2"/>
    <property type="match status" value="1"/>
</dbReference>
<dbReference type="FunFam" id="2.40.50.140:FF:000003">
    <property type="entry name" value="50S ribosomal protein L2"/>
    <property type="match status" value="1"/>
</dbReference>
<dbReference type="FunFam" id="4.10.950.10:FF:000001">
    <property type="entry name" value="50S ribosomal protein L2"/>
    <property type="match status" value="1"/>
</dbReference>
<dbReference type="Gene3D" id="2.30.30.30">
    <property type="match status" value="1"/>
</dbReference>
<dbReference type="Gene3D" id="2.40.50.140">
    <property type="entry name" value="Nucleic acid-binding proteins"/>
    <property type="match status" value="1"/>
</dbReference>
<dbReference type="Gene3D" id="4.10.950.10">
    <property type="entry name" value="Ribosomal protein L2, domain 3"/>
    <property type="match status" value="1"/>
</dbReference>
<dbReference type="HAMAP" id="MF_01320_B">
    <property type="entry name" value="Ribosomal_uL2_B"/>
    <property type="match status" value="1"/>
</dbReference>
<dbReference type="InterPro" id="IPR012340">
    <property type="entry name" value="NA-bd_OB-fold"/>
</dbReference>
<dbReference type="InterPro" id="IPR014722">
    <property type="entry name" value="Rib_uL2_dom2"/>
</dbReference>
<dbReference type="InterPro" id="IPR002171">
    <property type="entry name" value="Ribosomal_uL2"/>
</dbReference>
<dbReference type="InterPro" id="IPR005880">
    <property type="entry name" value="Ribosomal_uL2_bac/org-type"/>
</dbReference>
<dbReference type="InterPro" id="IPR022669">
    <property type="entry name" value="Ribosomal_uL2_C"/>
</dbReference>
<dbReference type="InterPro" id="IPR022671">
    <property type="entry name" value="Ribosomal_uL2_CS"/>
</dbReference>
<dbReference type="InterPro" id="IPR014726">
    <property type="entry name" value="Ribosomal_uL2_dom3"/>
</dbReference>
<dbReference type="InterPro" id="IPR022666">
    <property type="entry name" value="Ribosomal_uL2_RNA-bd_dom"/>
</dbReference>
<dbReference type="InterPro" id="IPR008991">
    <property type="entry name" value="Translation_prot_SH3-like_sf"/>
</dbReference>
<dbReference type="NCBIfam" id="TIGR01171">
    <property type="entry name" value="rplB_bact"/>
    <property type="match status" value="1"/>
</dbReference>
<dbReference type="PANTHER" id="PTHR13691:SF5">
    <property type="entry name" value="LARGE RIBOSOMAL SUBUNIT PROTEIN UL2M"/>
    <property type="match status" value="1"/>
</dbReference>
<dbReference type="PANTHER" id="PTHR13691">
    <property type="entry name" value="RIBOSOMAL PROTEIN L2"/>
    <property type="match status" value="1"/>
</dbReference>
<dbReference type="Pfam" id="PF00181">
    <property type="entry name" value="Ribosomal_L2"/>
    <property type="match status" value="1"/>
</dbReference>
<dbReference type="Pfam" id="PF03947">
    <property type="entry name" value="Ribosomal_L2_C"/>
    <property type="match status" value="1"/>
</dbReference>
<dbReference type="PIRSF" id="PIRSF002158">
    <property type="entry name" value="Ribosomal_L2"/>
    <property type="match status" value="1"/>
</dbReference>
<dbReference type="SMART" id="SM01383">
    <property type="entry name" value="Ribosomal_L2"/>
    <property type="match status" value="1"/>
</dbReference>
<dbReference type="SMART" id="SM01382">
    <property type="entry name" value="Ribosomal_L2_C"/>
    <property type="match status" value="1"/>
</dbReference>
<dbReference type="SUPFAM" id="SSF50249">
    <property type="entry name" value="Nucleic acid-binding proteins"/>
    <property type="match status" value="1"/>
</dbReference>
<dbReference type="SUPFAM" id="SSF50104">
    <property type="entry name" value="Translation proteins SH3-like domain"/>
    <property type="match status" value="1"/>
</dbReference>
<dbReference type="PROSITE" id="PS00467">
    <property type="entry name" value="RIBOSOMAL_L2"/>
    <property type="match status" value="1"/>
</dbReference>
<evidence type="ECO:0000255" key="1">
    <source>
        <dbReference type="HAMAP-Rule" id="MF_01320"/>
    </source>
</evidence>
<evidence type="ECO:0000256" key="2">
    <source>
        <dbReference type="SAM" id="MobiDB-lite"/>
    </source>
</evidence>
<evidence type="ECO:0000305" key="3"/>
<proteinExistence type="inferred from homology"/>
<organism>
    <name type="scientific">Pectobacterium carotovorum subsp. carotovorum (strain PC1)</name>
    <dbReference type="NCBI Taxonomy" id="561230"/>
    <lineage>
        <taxon>Bacteria</taxon>
        <taxon>Pseudomonadati</taxon>
        <taxon>Pseudomonadota</taxon>
        <taxon>Gammaproteobacteria</taxon>
        <taxon>Enterobacterales</taxon>
        <taxon>Pectobacteriaceae</taxon>
        <taxon>Pectobacterium</taxon>
    </lineage>
</organism>
<name>RL2_PECCP</name>
<accession>C6DG71</accession>
<sequence length="273" mass="29968">MAVVKCKPTSPGRRHVVKVVNPELHKGKPYAPLLEKNSKSGGRNNNGRITTRHIGGGHKQQYRLIDFKRNKDGIPAVVERLEYDPNRSANIALVLYKDGERRYILAPKGLKAGDQIQSGVDAAIKAGNTLPMRNIPVGSTVHNVEMKPGKGGQLARSAGTYVQIVARDGSYVTLRLRSGEMRKVESDCRATLGEVGNAEHMLRVLGKAGAARWRGVRPTVRGTAMNPVDHPHGGGEGRNFGKHPVSPWGLQTKGKKTRSNKRTDKFIVRRRTK</sequence>
<comment type="function">
    <text evidence="1">One of the primary rRNA binding proteins. Required for association of the 30S and 50S subunits to form the 70S ribosome, for tRNA binding and peptide bond formation. It has been suggested to have peptidyltransferase activity; this is somewhat controversial. Makes several contacts with the 16S rRNA in the 70S ribosome.</text>
</comment>
<comment type="subunit">
    <text evidence="1">Part of the 50S ribosomal subunit. Forms a bridge to the 30S subunit in the 70S ribosome.</text>
</comment>
<comment type="similarity">
    <text evidence="1">Belongs to the universal ribosomal protein uL2 family.</text>
</comment>
<keyword id="KW-0687">Ribonucleoprotein</keyword>
<keyword id="KW-0689">Ribosomal protein</keyword>
<keyword id="KW-0694">RNA-binding</keyword>
<keyword id="KW-0699">rRNA-binding</keyword>